<organism>
    <name type="scientific">Meyerozyma guilliermondii (strain ATCC 6260 / CBS 566 / DSM 6381 / JCM 1539 / NBRC 10279 / NRRL Y-324)</name>
    <name type="common">Yeast</name>
    <name type="synonym">Candida guilliermondii</name>
    <dbReference type="NCBI Taxonomy" id="294746"/>
    <lineage>
        <taxon>Eukaryota</taxon>
        <taxon>Fungi</taxon>
        <taxon>Dikarya</taxon>
        <taxon>Ascomycota</taxon>
        <taxon>Saccharomycotina</taxon>
        <taxon>Pichiomycetes</taxon>
        <taxon>Debaryomycetaceae</taxon>
        <taxon>Meyerozyma</taxon>
    </lineage>
</organism>
<accession>A5DGF3</accession>
<gene>
    <name type="ORF">PGUG_02354</name>
</gene>
<proteinExistence type="inferred from homology"/>
<reference key="1">
    <citation type="journal article" date="2009" name="Nature">
        <title>Evolution of pathogenicity and sexual reproduction in eight Candida genomes.</title>
        <authorList>
            <person name="Butler G."/>
            <person name="Rasmussen M.D."/>
            <person name="Lin M.F."/>
            <person name="Santos M.A.S."/>
            <person name="Sakthikumar S."/>
            <person name="Munro C.A."/>
            <person name="Rheinbay E."/>
            <person name="Grabherr M."/>
            <person name="Forche A."/>
            <person name="Reedy J.L."/>
            <person name="Agrafioti I."/>
            <person name="Arnaud M.B."/>
            <person name="Bates S."/>
            <person name="Brown A.J.P."/>
            <person name="Brunke S."/>
            <person name="Costanzo M.C."/>
            <person name="Fitzpatrick D.A."/>
            <person name="de Groot P.W.J."/>
            <person name="Harris D."/>
            <person name="Hoyer L.L."/>
            <person name="Hube B."/>
            <person name="Klis F.M."/>
            <person name="Kodira C."/>
            <person name="Lennard N."/>
            <person name="Logue M.E."/>
            <person name="Martin R."/>
            <person name="Neiman A.M."/>
            <person name="Nikolaou E."/>
            <person name="Quail M.A."/>
            <person name="Quinn J."/>
            <person name="Santos M.C."/>
            <person name="Schmitzberger F.F."/>
            <person name="Sherlock G."/>
            <person name="Shah P."/>
            <person name="Silverstein K.A.T."/>
            <person name="Skrzypek M.S."/>
            <person name="Soll D."/>
            <person name="Staggs R."/>
            <person name="Stansfield I."/>
            <person name="Stumpf M.P.H."/>
            <person name="Sudbery P.E."/>
            <person name="Srikantha T."/>
            <person name="Zeng Q."/>
            <person name="Berman J."/>
            <person name="Berriman M."/>
            <person name="Heitman J."/>
            <person name="Gow N.A.R."/>
            <person name="Lorenz M.C."/>
            <person name="Birren B.W."/>
            <person name="Kellis M."/>
            <person name="Cuomo C.A."/>
        </authorList>
    </citation>
    <scope>NUCLEOTIDE SEQUENCE [LARGE SCALE GENOMIC DNA]</scope>
    <source>
        <strain>ATCC 6260 / CBS 566 / DSM 6381 / JCM 1539 / NBRC 10279 / NRRL Y-324</strain>
    </source>
</reference>
<dbReference type="EC" id="3.4.11.-"/>
<dbReference type="EC" id="3.3.2.10"/>
<dbReference type="EMBL" id="CH408157">
    <property type="protein sequence ID" value="EDK38256.2"/>
    <property type="molecule type" value="Genomic_DNA"/>
</dbReference>
<dbReference type="RefSeq" id="XP_001484625.2">
    <property type="nucleotide sequence ID" value="XM_001484575.1"/>
</dbReference>
<dbReference type="SMR" id="A5DGF3"/>
<dbReference type="STRING" id="294746.A5DGF3"/>
<dbReference type="MEROPS" id="M01.034"/>
<dbReference type="GeneID" id="5126859"/>
<dbReference type="KEGG" id="pgu:PGUG_02354"/>
<dbReference type="VEuPathDB" id="FungiDB:PGUG_02354"/>
<dbReference type="eggNOG" id="KOG1047">
    <property type="taxonomic scope" value="Eukaryota"/>
</dbReference>
<dbReference type="HOGENOM" id="CLU_014505_1_2_1"/>
<dbReference type="InParanoid" id="A5DGF3"/>
<dbReference type="OMA" id="FPGNHHP"/>
<dbReference type="OrthoDB" id="79562at2759"/>
<dbReference type="Proteomes" id="UP000001997">
    <property type="component" value="Unassembled WGS sequence"/>
</dbReference>
<dbReference type="GO" id="GO:0005829">
    <property type="term" value="C:cytosol"/>
    <property type="evidence" value="ECO:0007669"/>
    <property type="project" value="TreeGrafter"/>
</dbReference>
<dbReference type="GO" id="GO:0005634">
    <property type="term" value="C:nucleus"/>
    <property type="evidence" value="ECO:0007669"/>
    <property type="project" value="UniProtKB-SubCell"/>
</dbReference>
<dbReference type="GO" id="GO:0004177">
    <property type="term" value="F:aminopeptidase activity"/>
    <property type="evidence" value="ECO:0000250"/>
    <property type="project" value="UniProtKB"/>
</dbReference>
<dbReference type="GO" id="GO:0004301">
    <property type="term" value="F:epoxide hydrolase activity"/>
    <property type="evidence" value="ECO:0000250"/>
    <property type="project" value="UniProtKB"/>
</dbReference>
<dbReference type="GO" id="GO:0008237">
    <property type="term" value="F:metallopeptidase activity"/>
    <property type="evidence" value="ECO:0007669"/>
    <property type="project" value="UniProtKB-KW"/>
</dbReference>
<dbReference type="GO" id="GO:0008270">
    <property type="term" value="F:zinc ion binding"/>
    <property type="evidence" value="ECO:0000250"/>
    <property type="project" value="UniProtKB"/>
</dbReference>
<dbReference type="GO" id="GO:0043171">
    <property type="term" value="P:peptide catabolic process"/>
    <property type="evidence" value="ECO:0000250"/>
    <property type="project" value="UniProtKB"/>
</dbReference>
<dbReference type="GO" id="GO:0006508">
    <property type="term" value="P:proteolysis"/>
    <property type="evidence" value="ECO:0007669"/>
    <property type="project" value="UniProtKB-KW"/>
</dbReference>
<dbReference type="CDD" id="cd09599">
    <property type="entry name" value="M1_LTA4H"/>
    <property type="match status" value="1"/>
</dbReference>
<dbReference type="FunFam" id="1.10.390.10:FF:000009">
    <property type="entry name" value="Leukotriene A(4) hydrolase"/>
    <property type="match status" value="1"/>
</dbReference>
<dbReference type="FunFam" id="1.25.40.320:FF:000001">
    <property type="entry name" value="Leukotriene A(4) hydrolase"/>
    <property type="match status" value="1"/>
</dbReference>
<dbReference type="FunFam" id="2.60.40.1730:FF:000004">
    <property type="entry name" value="Leukotriene A(4) hydrolase"/>
    <property type="match status" value="1"/>
</dbReference>
<dbReference type="FunFam" id="3.30.2010.30:FF:000001">
    <property type="entry name" value="Leukotriene A(4) hydrolase"/>
    <property type="match status" value="1"/>
</dbReference>
<dbReference type="Gene3D" id="3.30.2010.30">
    <property type="match status" value="1"/>
</dbReference>
<dbReference type="Gene3D" id="1.10.390.10">
    <property type="entry name" value="Neutral Protease Domain 2"/>
    <property type="match status" value="1"/>
</dbReference>
<dbReference type="Gene3D" id="1.25.40.320">
    <property type="entry name" value="Peptidase M1, leukotriene A4 hydrolase/aminopeptidase C-terminal domain"/>
    <property type="match status" value="1"/>
</dbReference>
<dbReference type="Gene3D" id="2.60.40.1730">
    <property type="entry name" value="tricorn interacting facor f3 domain"/>
    <property type="match status" value="1"/>
</dbReference>
<dbReference type="InterPro" id="IPR045357">
    <property type="entry name" value="Aminopeptidase_N-like_N"/>
</dbReference>
<dbReference type="InterPro" id="IPR042097">
    <property type="entry name" value="Aminopeptidase_N-like_N_sf"/>
</dbReference>
<dbReference type="InterPro" id="IPR016024">
    <property type="entry name" value="ARM-type_fold"/>
</dbReference>
<dbReference type="InterPro" id="IPR012777">
    <property type="entry name" value="LTA4H"/>
</dbReference>
<dbReference type="InterPro" id="IPR049980">
    <property type="entry name" value="LTA4H_cat"/>
</dbReference>
<dbReference type="InterPro" id="IPR038502">
    <property type="entry name" value="M1_LTA-4_hydro/amino_C_sf"/>
</dbReference>
<dbReference type="InterPro" id="IPR034015">
    <property type="entry name" value="M1_LTA4H"/>
</dbReference>
<dbReference type="InterPro" id="IPR001930">
    <property type="entry name" value="Peptidase_M1"/>
</dbReference>
<dbReference type="InterPro" id="IPR015211">
    <property type="entry name" value="Peptidase_M1_C"/>
</dbReference>
<dbReference type="InterPro" id="IPR014782">
    <property type="entry name" value="Peptidase_M1_dom"/>
</dbReference>
<dbReference type="InterPro" id="IPR027268">
    <property type="entry name" value="Peptidase_M4/M1_CTD_sf"/>
</dbReference>
<dbReference type="NCBIfam" id="TIGR02411">
    <property type="entry name" value="leuko_A4_hydro"/>
    <property type="match status" value="1"/>
</dbReference>
<dbReference type="PANTHER" id="PTHR45726">
    <property type="entry name" value="LEUKOTRIENE A-4 HYDROLASE"/>
    <property type="match status" value="1"/>
</dbReference>
<dbReference type="PANTHER" id="PTHR45726:SF3">
    <property type="entry name" value="LEUKOTRIENE A-4 HYDROLASE"/>
    <property type="match status" value="1"/>
</dbReference>
<dbReference type="Pfam" id="PF09127">
    <property type="entry name" value="Leuk-A4-hydro_C"/>
    <property type="match status" value="1"/>
</dbReference>
<dbReference type="Pfam" id="PF01433">
    <property type="entry name" value="Peptidase_M1"/>
    <property type="match status" value="1"/>
</dbReference>
<dbReference type="Pfam" id="PF17900">
    <property type="entry name" value="Peptidase_M1_N"/>
    <property type="match status" value="1"/>
</dbReference>
<dbReference type="PRINTS" id="PR00756">
    <property type="entry name" value="ALADIPTASE"/>
</dbReference>
<dbReference type="SMART" id="SM01263">
    <property type="entry name" value="Leuk-A4-hydro_C"/>
    <property type="match status" value="1"/>
</dbReference>
<dbReference type="SUPFAM" id="SSF48371">
    <property type="entry name" value="ARM repeat"/>
    <property type="match status" value="1"/>
</dbReference>
<dbReference type="SUPFAM" id="SSF63737">
    <property type="entry name" value="Leukotriene A4 hydrolase N-terminal domain"/>
    <property type="match status" value="1"/>
</dbReference>
<dbReference type="SUPFAM" id="SSF55486">
    <property type="entry name" value="Metalloproteases ('zincins'), catalytic domain"/>
    <property type="match status" value="1"/>
</dbReference>
<dbReference type="PROSITE" id="PS00142">
    <property type="entry name" value="ZINC_PROTEASE"/>
    <property type="match status" value="1"/>
</dbReference>
<name>LKA42_PICGU</name>
<feature type="chain" id="PRO_0000324937" description="Leucine aminopeptidase 2-2">
    <location>
        <begin position="1"/>
        <end position="631"/>
    </location>
</feature>
<feature type="active site" description="Proton acceptor" evidence="3">
    <location>
        <position position="295"/>
    </location>
</feature>
<feature type="active site" description="Proton donor" evidence="3">
    <location>
        <position position="395"/>
    </location>
</feature>
<feature type="binding site" evidence="1">
    <location>
        <begin position="140"/>
        <end position="142"/>
    </location>
    <ligand>
        <name>substrate</name>
    </ligand>
</feature>
<feature type="binding site" evidence="1">
    <location>
        <begin position="265"/>
        <end position="270"/>
    </location>
    <ligand>
        <name>substrate</name>
    </ligand>
</feature>
<feature type="binding site" evidence="3">
    <location>
        <position position="294"/>
    </location>
    <ligand>
        <name>Zn(2+)</name>
        <dbReference type="ChEBI" id="CHEBI:29105"/>
        <note>catalytic</note>
    </ligand>
</feature>
<feature type="binding site" evidence="3">
    <location>
        <position position="298"/>
    </location>
    <ligand>
        <name>Zn(2+)</name>
        <dbReference type="ChEBI" id="CHEBI:29105"/>
        <note>catalytic</note>
    </ligand>
</feature>
<feature type="binding site" evidence="3">
    <location>
        <position position="317"/>
    </location>
    <ligand>
        <name>Zn(2+)</name>
        <dbReference type="ChEBI" id="CHEBI:29105"/>
        <note>catalytic</note>
    </ligand>
</feature>
<sequence>MNVNELRSRAASQEQDPCTLSNYRGFEVVQSSLDLNVSFEKKNVSGTVTYELKNLKSTTEVVLDTSFLDIEQAFVDEKAVDFKLEARKEPFGSPLVIKLANVVEKLKISIKFATTENCSALQFIDKEATDSKVCDYLFSQCQAIHARSLFPCFDTPAVKSPYSFHVKSPSYTLMSGRPVECSEENTYRFEQPIPIPSYLVAIASGNLAGAPIGPRSTVYTEPPNLKACQWEFEKDMENFLVVAEDLIYKYEWLKYDALILPSSFPYGGMENPNITFATPTLISKDRSQVKVMAHELAHSWSGNLVTNCTWEHFWLNEGWTVYLERRILGGVASYEAKQRGEKDYVDAGEKVRHFAAILGWNDLVDTVKTIPSQYTRLVWDLKTVTPDDAFSKIPYEKGFSFLFYLETVLGGTDEFDPFMKHYFKKYRYKSLDSYQFIDTLYEFFEPKGKKDVLDSVDWNTWLYGEGVPPFTPKYDTRLADECYHLRDKWAAYEQNKGQFSASDIEHFEVNQHLLFLGTLTELFSNKKPAPEVYEELRKVYHQYSEASNCEIIASWNDLLLKSENFKPSDKIVQNFATWLGTVGRMKFARPGYKLLKDYVDKDLAIATFRKFESRYHPICKAMVRKDLGLDS</sequence>
<evidence type="ECO:0000250" key="1"/>
<evidence type="ECO:0000250" key="2">
    <source>
        <dbReference type="UniProtKB" id="Q10740"/>
    </source>
</evidence>
<evidence type="ECO:0000255" key="3">
    <source>
        <dbReference type="PROSITE-ProRule" id="PRU10095"/>
    </source>
</evidence>
<evidence type="ECO:0000305" key="4"/>
<comment type="function">
    <text evidence="2">Aminopeptidase that preferentially cleaves di- and tripeptides. Also has low epoxide hydrolase activity (in vitro). Can hydrolyze the epoxide leukotriene LTA(4) but it forms preferentially 5,6-dihydroxy-7,9,11,14-eicosatetraenoic acid rather than the cytokine leukotriene B(4) as the product compared to the homologous mammalian enzyme (in vitro).</text>
</comment>
<comment type="catalytic activity">
    <reaction evidence="2">
        <text>an epoxide + H2O = an ethanediol</text>
        <dbReference type="Rhea" id="RHEA:19037"/>
        <dbReference type="ChEBI" id="CHEBI:15377"/>
        <dbReference type="ChEBI" id="CHEBI:32955"/>
        <dbReference type="ChEBI" id="CHEBI:140594"/>
        <dbReference type="EC" id="3.3.2.10"/>
    </reaction>
</comment>
<comment type="cofactor">
    <cofactor evidence="2">
        <name>Zn(2+)</name>
        <dbReference type="ChEBI" id="CHEBI:29105"/>
    </cofactor>
    <text evidence="2">Binds 1 zinc ion per subunit.</text>
</comment>
<comment type="subcellular location">
    <subcellularLocation>
        <location evidence="2">Cytoplasm</location>
    </subcellularLocation>
    <subcellularLocation>
        <location evidence="2">Nucleus</location>
    </subcellularLocation>
</comment>
<comment type="similarity">
    <text evidence="4">Belongs to the peptidase M1 family.</text>
</comment>
<keyword id="KW-0963">Cytoplasm</keyword>
<keyword id="KW-0378">Hydrolase</keyword>
<keyword id="KW-0479">Metal-binding</keyword>
<keyword id="KW-0482">Metalloprotease</keyword>
<keyword id="KW-0539">Nucleus</keyword>
<keyword id="KW-0645">Protease</keyword>
<keyword id="KW-1185">Reference proteome</keyword>
<keyword id="KW-0862">Zinc</keyword>
<protein>
    <recommendedName>
        <fullName>Leucine aminopeptidase 2-2</fullName>
        <ecNumber>3.4.11.-</ecNumber>
    </recommendedName>
    <alternativeName>
        <fullName>Epoxide hydrolase</fullName>
        <ecNumber>3.3.2.10</ecNumber>
    </alternativeName>
    <alternativeName>
        <fullName>Leukotriene A-4 hydrolase homolog 2</fullName>
        <shortName>LTA-4 hydrolase 2</shortName>
    </alternativeName>
</protein>